<keyword id="KW-0325">Glycoprotein</keyword>
<keyword id="KW-0654">Proteoglycan</keyword>
<keyword id="KW-1185">Reference proteome</keyword>
<keyword id="KW-0732">Signal</keyword>
<dbReference type="EMBL" id="HE601187">
    <property type="protein sequence ID" value="CAP28561.1"/>
    <property type="molecule type" value="Genomic_DNA"/>
</dbReference>
<dbReference type="FunCoup" id="A8X7F0">
    <property type="interactions" value="223"/>
</dbReference>
<dbReference type="STRING" id="6238.A8X7F0"/>
<dbReference type="GlyCosmos" id="A8X7F0">
    <property type="glycosylation" value="5 sites, No reported glycans"/>
</dbReference>
<dbReference type="EnsemblMetazoa" id="CBG08797.1">
    <property type="protein sequence ID" value="CBG08797.1"/>
    <property type="gene ID" value="WBGene00030528"/>
</dbReference>
<dbReference type="KEGG" id="cbr:CBG_08797"/>
<dbReference type="CTD" id="8577492"/>
<dbReference type="WormBase" id="CBG08797">
    <property type="protein sequence ID" value="CBP08066"/>
    <property type="gene ID" value="WBGene00030528"/>
    <property type="gene designation" value="Cbr-cpg-8"/>
</dbReference>
<dbReference type="eggNOG" id="ENOG502R8AK">
    <property type="taxonomic scope" value="Eukaryota"/>
</dbReference>
<dbReference type="HOGENOM" id="CLU_2199364_0_0_1"/>
<dbReference type="InParanoid" id="A8X7F0"/>
<dbReference type="OMA" id="YSVHKTE"/>
<dbReference type="OrthoDB" id="5847191at2759"/>
<dbReference type="Proteomes" id="UP000008549">
    <property type="component" value="Unassembled WGS sequence"/>
</dbReference>
<name>CPG8_CAEBR</name>
<proteinExistence type="inferred from homology"/>
<organism>
    <name type="scientific">Caenorhabditis briggsae</name>
    <dbReference type="NCBI Taxonomy" id="6238"/>
    <lineage>
        <taxon>Eukaryota</taxon>
        <taxon>Metazoa</taxon>
        <taxon>Ecdysozoa</taxon>
        <taxon>Nematoda</taxon>
        <taxon>Chromadorea</taxon>
        <taxon>Rhabditida</taxon>
        <taxon>Rhabditina</taxon>
        <taxon>Rhabditomorpha</taxon>
        <taxon>Rhabditoidea</taxon>
        <taxon>Rhabditidae</taxon>
        <taxon>Peloderinae</taxon>
        <taxon>Caenorhabditis</taxon>
    </lineage>
</organism>
<evidence type="ECO:0000250" key="1">
    <source>
        <dbReference type="UniProtKB" id="Q21175"/>
    </source>
</evidence>
<evidence type="ECO:0000255" key="2"/>
<evidence type="ECO:0000256" key="3">
    <source>
        <dbReference type="SAM" id="MobiDB-lite"/>
    </source>
</evidence>
<evidence type="ECO:0000305" key="4"/>
<evidence type="ECO:0000312" key="5">
    <source>
        <dbReference type="EMBL" id="CAP28561.1"/>
    </source>
</evidence>
<reference evidence="4 5" key="1">
    <citation type="journal article" date="2003" name="PLoS Biol.">
        <title>The genome sequence of Caenorhabditis briggsae: a platform for comparative genomics.</title>
        <authorList>
            <person name="Stein L.D."/>
            <person name="Bao Z."/>
            <person name="Blasiar D."/>
            <person name="Blumenthal T."/>
            <person name="Brent M.R."/>
            <person name="Chen N."/>
            <person name="Chinwalla A."/>
            <person name="Clarke L."/>
            <person name="Clee C."/>
            <person name="Coghlan A."/>
            <person name="Coulson A."/>
            <person name="D'Eustachio P."/>
            <person name="Fitch D.H.A."/>
            <person name="Fulton L.A."/>
            <person name="Fulton R.E."/>
            <person name="Griffiths-Jones S."/>
            <person name="Harris T.W."/>
            <person name="Hillier L.W."/>
            <person name="Kamath R."/>
            <person name="Kuwabara P.E."/>
            <person name="Mardis E.R."/>
            <person name="Marra M.A."/>
            <person name="Miner T.L."/>
            <person name="Minx P."/>
            <person name="Mullikin J.C."/>
            <person name="Plumb R.W."/>
            <person name="Rogers J."/>
            <person name="Schein J.E."/>
            <person name="Sohrmann M."/>
            <person name="Spieth J."/>
            <person name="Stajich J.E."/>
            <person name="Wei C."/>
            <person name="Willey D."/>
            <person name="Wilson R.K."/>
            <person name="Durbin R.M."/>
            <person name="Waterston R.H."/>
        </authorList>
    </citation>
    <scope>NUCLEOTIDE SEQUENCE [LARGE SCALE GENOMIC DNA]</scope>
    <source>
        <strain evidence="5">AF16</strain>
    </source>
</reference>
<accession>A8X7F0</accession>
<protein>
    <recommendedName>
        <fullName>Chondroitin proteoglycan 8</fullName>
    </recommendedName>
</protein>
<gene>
    <name type="primary">cpg-8</name>
    <name type="ORF">CBG08797</name>
</gene>
<feature type="signal peptide" evidence="2">
    <location>
        <begin position="1"/>
        <end position="16"/>
    </location>
</feature>
<feature type="chain" id="PRO_0000320227" description="Chondroitin proteoglycan 8">
    <location>
        <begin position="17"/>
        <end position="123"/>
    </location>
</feature>
<feature type="region of interest" description="Disordered" evidence="3">
    <location>
        <begin position="32"/>
        <end position="123"/>
    </location>
</feature>
<feature type="compositionally biased region" description="Basic and acidic residues" evidence="3">
    <location>
        <begin position="38"/>
        <end position="60"/>
    </location>
</feature>
<feature type="compositionally biased region" description="Basic and acidic residues" evidence="3">
    <location>
        <begin position="74"/>
        <end position="84"/>
    </location>
</feature>
<feature type="glycosylation site" description="O-linked (Xyl...) (chondroitin sulfate) serine" evidence="1">
    <location>
        <position position="63"/>
    </location>
</feature>
<feature type="glycosylation site" description="O-linked (Xyl...) (chondroitin sulfate) serine" evidence="1">
    <location>
        <position position="65"/>
    </location>
</feature>
<feature type="glycosylation site" description="O-linked (Xyl...) (chondroitin sulfate) serine" evidence="1">
    <location>
        <position position="87"/>
    </location>
</feature>
<feature type="glycosylation site" description="O-linked (Xyl...) (chondroitin sulfate) serine" evidence="1">
    <location>
        <position position="93"/>
    </location>
</feature>
<feature type="glycosylation site" description="O-linked (Xyl...) (chondroitin sulfate) serine" evidence="1">
    <location>
        <position position="114"/>
    </location>
</feature>
<sequence length="123" mass="13074">MRPFILLALLFSVAIAFNIFRDEAVPEEQLLSVRRSTRGADKKADSSDSSDSNEKDDKVTEGSGSGDTPVEAEEQLRRVARDVEEASGEEEGSGAAQVTSAPVRFVRSVDVEGSGSGDEAPAE</sequence>